<accession>Q7SIG6</accession>
<accession>Q501K1</accession>
<accession>Q66JN2</accession>
<sequence length="958" mass="106805">MPDQISVSEFVAETHEDYKAPTASSFTTRTAQCRNTVAAIEEALDVDRMVLYKMKKSVKAINISGLAHVENEEQYTQALEKFGGNCVCRDDPDLGSAFLKFSVFTKELTALFKNLIQNMNNIISFPLDSLLKGDLKGVKGDLKKPFDKAWKDYETKITKIEKEKKEHAKLHGMIRTEISGAEIAEEMEKERRFFQLQMCEYLLKVNEIKVKKGVDLLQNLIKYFHAQCNFFQDGLKAVESLKPSIETLSTDLHTIKQAQDEERRQLIQLRDILKSALQVEQKESRRDSQLRQSTAYSLHQPQGNKEHGTERNGNLYKKSDGIRKVWQKRKCSVKNGFLTISHGTANRPPAKLNLLTCQVKTNPEEKKCFDLISHDRTYHFQAEDEQECQIWMSVLQNSKEEALNNAFKGDDNTGENNIVQELTKEIISEVQRMTGNDVCCDCGAPDPTWLSTNLGILTCIECSGIHRELGVHYSRMQSLTLDVLGTSELLLAKNIGNAGFNEIMECCLPSEDPVKPNPGSDMIARKDYITAKYMERRYARKKHADTAAKLHSLCEAVKTRDIFGLLQAYADGVDLTEKIPLANGHEPDETALHLAVRSVDRTSLHIVDFLVQNSGNLDKQTGKGSTALHYCCLTDNAECLKLLLRGKASIEIANESGETPLDIAKRLKHEHCEELLTQALSGRFNSHVHVEYEWRLLHEDLDESDDDVDEKLQPSPNRREDRPVSFYQLGSSQFQSNAVSLARDTANLTKDKQRGFGPSILQNETYGAILSGSPPSSQSIPPSTTSAPPLPPRNVGKDPLTTTPPPPVAKTSGTLEAMNQPSKSSQPGTSQSKPPPLPPQPPSRLPQKKPASGTDKPTPLTNKGQPRGPEASGPLSNAMALQPPAPMPRKSQATKSKPKRVKALYNCVADNPDELTFSEGDVIIVDGEEDQEWWIGHIDGEPSRKGAFPVSFVHFIAD</sequence>
<feature type="chain" id="PRO_0000074199" description="Arf-GAP with SH3 domain, ANK repeat and PH domain-containing protein 2">
    <location>
        <begin position="1"/>
        <end position="958"/>
    </location>
</feature>
<feature type="domain" description="PH" evidence="4">
    <location>
        <begin position="308"/>
        <end position="400"/>
    </location>
</feature>
<feature type="domain" description="Arf-GAP" evidence="6">
    <location>
        <begin position="424"/>
        <end position="546"/>
    </location>
</feature>
<feature type="repeat" description="ANK 1">
    <location>
        <begin position="587"/>
        <end position="619"/>
    </location>
</feature>
<feature type="repeat" description="ANK 2">
    <location>
        <begin position="623"/>
        <end position="655"/>
    </location>
</feature>
<feature type="domain" description="SH3" evidence="5">
    <location>
        <begin position="896"/>
        <end position="958"/>
    </location>
</feature>
<feature type="region of interest" description="Disordered" evidence="7">
    <location>
        <begin position="283"/>
        <end position="316"/>
    </location>
</feature>
<feature type="region of interest" description="Disordered" evidence="7">
    <location>
        <begin position="703"/>
        <end position="724"/>
    </location>
</feature>
<feature type="region of interest" description="Disordered" evidence="7">
    <location>
        <begin position="767"/>
        <end position="900"/>
    </location>
</feature>
<feature type="coiled-coil region" evidence="3">
    <location>
        <begin position="259"/>
        <end position="286"/>
    </location>
</feature>
<feature type="compositionally biased region" description="Polar residues" evidence="7">
    <location>
        <begin position="290"/>
        <end position="303"/>
    </location>
</feature>
<feature type="compositionally biased region" description="Low complexity" evidence="7">
    <location>
        <begin position="768"/>
        <end position="787"/>
    </location>
</feature>
<feature type="compositionally biased region" description="Polar residues" evidence="7">
    <location>
        <begin position="811"/>
        <end position="829"/>
    </location>
</feature>
<feature type="compositionally biased region" description="Pro residues" evidence="7">
    <location>
        <begin position="833"/>
        <end position="844"/>
    </location>
</feature>
<feature type="modified residue" description="Phosphoserine" evidence="12 13">
    <location>
        <position position="704"/>
    </location>
</feature>
<feature type="modified residue" description="Phosphothreonine" evidence="2">
    <location>
        <position position="861"/>
    </location>
</feature>
<feature type="splice variant" id="VSP_014776" description="In isoform 2." evidence="11">
    <location>
        <begin position="284"/>
        <end position="286"/>
    </location>
</feature>
<feature type="splice variant" id="VSP_014777" description="In isoform 2." evidence="11">
    <location>
        <begin position="345"/>
        <end position="490"/>
    </location>
</feature>
<feature type="mutagenesis site" description="Strongly reduces Arf-GAP mediated stimulation of GTP hydrolysis." evidence="9">
    <original>W</original>
    <variation>A</variation>
    <location>
        <position position="449"/>
    </location>
</feature>
<feature type="mutagenesis site" description="Reduces Arf-GAP mediated stimulation of GTP hydrolysis 100-fold and abolishes Arf-GAP mediated stimulation of GTP hydrolysis; when associated with A-306." evidence="9">
    <original>I</original>
    <variation>A</variation>
    <location>
        <position position="460"/>
    </location>
</feature>
<feature type="mutagenesis site" description="Abolishes Arf-GAP mediated stimulation of GTP hydrolysis." evidence="9">
    <original>R</original>
    <variation>A</variation>
    <location>
        <position position="467"/>
    </location>
</feature>
<feature type="mutagenesis site" description="Reduces Arf-GAP mediated stimulation of GTP hydrolysis more than 10000-fold." evidence="9">
    <original>R</original>
    <variation>K</variation>
    <location>
        <position position="467"/>
    </location>
</feature>
<feature type="mutagenesis site" description="Reduces Arf-GAP mediated stimulation of GTP hydrolysis 100-fold and abolishes Arf-GAP mediated stimulation of GTP hydrolysis; when associated with A-285." evidence="9">
    <original>L</original>
    <variation>A</variation>
    <location>
        <position position="481"/>
    </location>
</feature>
<feature type="mutagenesis site" description="Reduces Arf-GAP mediated stimulation of GTP hydrolysis 1000-fold." evidence="9">
    <original>D</original>
    <variation>A</variation>
    <location>
        <position position="482"/>
    </location>
</feature>
<feature type="helix" evidence="14">
    <location>
        <begin position="423"/>
        <end position="432"/>
    </location>
</feature>
<feature type="turn" evidence="14">
    <location>
        <begin position="434"/>
        <end position="437"/>
    </location>
</feature>
<feature type="turn" evidence="14">
    <location>
        <begin position="440"/>
        <end position="442"/>
    </location>
</feature>
<feature type="strand" evidence="14">
    <location>
        <begin position="449"/>
        <end position="451"/>
    </location>
</feature>
<feature type="turn" evidence="14">
    <location>
        <begin position="452"/>
        <end position="454"/>
    </location>
</feature>
<feature type="helix" evidence="14">
    <location>
        <begin position="460"/>
        <end position="469"/>
    </location>
</feature>
<feature type="turn" evidence="14">
    <location>
        <begin position="471"/>
        <end position="473"/>
    </location>
</feature>
<feature type="strand" evidence="14">
    <location>
        <begin position="476"/>
        <end position="478"/>
    </location>
</feature>
<feature type="turn" evidence="14">
    <location>
        <begin position="479"/>
        <end position="481"/>
    </location>
</feature>
<feature type="helix" evidence="14">
    <location>
        <begin position="486"/>
        <end position="489"/>
    </location>
</feature>
<feature type="helix" evidence="14">
    <location>
        <begin position="490"/>
        <end position="494"/>
    </location>
</feature>
<feature type="helix" evidence="14">
    <location>
        <begin position="497"/>
        <end position="504"/>
    </location>
</feature>
<feature type="turn" evidence="14">
    <location>
        <begin position="505"/>
        <end position="507"/>
    </location>
</feature>
<feature type="strand" evidence="14">
    <location>
        <begin position="510"/>
        <end position="512"/>
    </location>
</feature>
<feature type="helix" evidence="14">
    <location>
        <begin position="522"/>
        <end position="533"/>
    </location>
</feature>
<feature type="strand" evidence="14">
    <location>
        <begin position="543"/>
        <end position="545"/>
    </location>
</feature>
<feature type="helix" evidence="14">
    <location>
        <begin position="546"/>
        <end position="558"/>
    </location>
</feature>
<feature type="helix" evidence="14">
    <location>
        <begin position="562"/>
        <end position="570"/>
    </location>
</feature>
<feature type="helix" evidence="14">
    <location>
        <begin position="591"/>
        <end position="598"/>
    </location>
</feature>
<feature type="turn" evidence="14">
    <location>
        <begin position="601"/>
        <end position="603"/>
    </location>
</feature>
<feature type="helix" evidence="14">
    <location>
        <begin position="604"/>
        <end position="613"/>
    </location>
</feature>
<feature type="helix" evidence="14">
    <location>
        <begin position="627"/>
        <end position="633"/>
    </location>
</feature>
<feature type="helix" evidence="14">
    <location>
        <begin position="637"/>
        <end position="645"/>
    </location>
</feature>
<feature type="helix" evidence="14">
    <location>
        <begin position="660"/>
        <end position="666"/>
    </location>
</feature>
<feature type="helix" evidence="14">
    <location>
        <begin position="670"/>
        <end position="680"/>
    </location>
</feature>
<comment type="function">
    <text evidence="1 8 10">Activates the small GTPases ARF1, ARF5 and ARF6. Regulates the formation of post-Golgi vesicles and modulates constitutive secretion. Modulates phagocytosis mediated by Fc gamma receptor and ARF6. Modulates PXN recruitment to focal contacts and cell migration (By similarity).</text>
</comment>
<comment type="subunit">
    <text evidence="9">Binds PXN, ARF1, ARF5, ARF6, PTK2B and SRC.</text>
</comment>
<comment type="subcellular location">
    <subcellularLocation>
        <location>Cytoplasm</location>
    </subcellularLocation>
    <subcellularLocation>
        <location>Golgi apparatus</location>
        <location>Golgi stack membrane</location>
        <topology>Peripheral membrane protein</topology>
    </subcellularLocation>
    <subcellularLocation>
        <location>Cell membrane</location>
        <topology>Peripheral membrane protein</topology>
    </subcellularLocation>
    <text>Colocalizes with F-actin and ARF6 in phagocytic cups.</text>
</comment>
<comment type="alternative products">
    <event type="alternative splicing"/>
    <isoform>
        <id>Q7SIG6-1</id>
        <name>1</name>
        <sequence type="displayed"/>
    </isoform>
    <isoform>
        <id>Q7SIG6-2</id>
        <name>2</name>
        <sequence type="described" ref="VSP_014776 VSP_014777"/>
    </isoform>
</comment>
<comment type="domain">
    <text>The conserved Arg-467 in the Arf-GAP domain probably becomes part of the active site of bound small GTPases and is necessary for GTP hydrolysis.</text>
</comment>
<comment type="PTM">
    <text evidence="1">Phosphorylated on tyrosine residues by SRC and PTK2B.</text>
</comment>
<proteinExistence type="evidence at protein level"/>
<organism>
    <name type="scientific">Mus musculus</name>
    <name type="common">Mouse</name>
    <dbReference type="NCBI Taxonomy" id="10090"/>
    <lineage>
        <taxon>Eukaryota</taxon>
        <taxon>Metazoa</taxon>
        <taxon>Chordata</taxon>
        <taxon>Craniata</taxon>
        <taxon>Vertebrata</taxon>
        <taxon>Euteleostomi</taxon>
        <taxon>Mammalia</taxon>
        <taxon>Eutheria</taxon>
        <taxon>Euarchontoglires</taxon>
        <taxon>Glires</taxon>
        <taxon>Rodentia</taxon>
        <taxon>Myomorpha</taxon>
        <taxon>Muroidea</taxon>
        <taxon>Muridae</taxon>
        <taxon>Murinae</taxon>
        <taxon>Mus</taxon>
        <taxon>Mus</taxon>
    </lineage>
</organism>
<gene>
    <name type="primary">Asap2</name>
    <name type="synonym">Ddef2</name>
    <name type="synonym">Gm1523</name>
    <name type="synonym">Gm592</name>
</gene>
<protein>
    <recommendedName>
        <fullName>Arf-GAP with SH3 domain, ANK repeat and PH domain-containing protein 2</fullName>
    </recommendedName>
    <alternativeName>
        <fullName>Development and differentiation-enhancing factor 2</fullName>
    </alternativeName>
    <alternativeName>
        <fullName>Paxillin-associated protein with ARF GAP activity 3</fullName>
        <shortName>PAG3</shortName>
    </alternativeName>
    <alternativeName>
        <fullName>Pyk2 C-terminus-associated protein</fullName>
        <shortName>PAP</shortName>
    </alternativeName>
</protein>
<keyword id="KW-0002">3D-structure</keyword>
<keyword id="KW-0025">Alternative splicing</keyword>
<keyword id="KW-0040">ANK repeat</keyword>
<keyword id="KW-1003">Cell membrane</keyword>
<keyword id="KW-0175">Coiled coil</keyword>
<keyword id="KW-0963">Cytoplasm</keyword>
<keyword id="KW-0903">Direct protein sequencing</keyword>
<keyword id="KW-0333">Golgi apparatus</keyword>
<keyword id="KW-0343">GTPase activation</keyword>
<keyword id="KW-0472">Membrane</keyword>
<keyword id="KW-0479">Metal-binding</keyword>
<keyword id="KW-0597">Phosphoprotein</keyword>
<keyword id="KW-1185">Reference proteome</keyword>
<keyword id="KW-0677">Repeat</keyword>
<keyword id="KW-0728">SH3 domain</keyword>
<keyword id="KW-0862">Zinc</keyword>
<name>ASAP2_MOUSE</name>
<evidence type="ECO:0000250" key="1"/>
<evidence type="ECO:0000250" key="2">
    <source>
        <dbReference type="UniProtKB" id="O43150"/>
    </source>
</evidence>
<evidence type="ECO:0000255" key="3"/>
<evidence type="ECO:0000255" key="4">
    <source>
        <dbReference type="PROSITE-ProRule" id="PRU00145"/>
    </source>
</evidence>
<evidence type="ECO:0000255" key="5">
    <source>
        <dbReference type="PROSITE-ProRule" id="PRU00192"/>
    </source>
</evidence>
<evidence type="ECO:0000255" key="6">
    <source>
        <dbReference type="PROSITE-ProRule" id="PRU00288"/>
    </source>
</evidence>
<evidence type="ECO:0000256" key="7">
    <source>
        <dbReference type="SAM" id="MobiDB-lite"/>
    </source>
</evidence>
<evidence type="ECO:0000269" key="8">
    <source>
    </source>
</evidence>
<evidence type="ECO:0000269" key="9">
    <source>
    </source>
</evidence>
<evidence type="ECO:0000269" key="10">
    <source>
    </source>
</evidence>
<evidence type="ECO:0000303" key="11">
    <source>
    </source>
</evidence>
<evidence type="ECO:0007744" key="12">
    <source>
    </source>
</evidence>
<evidence type="ECO:0007744" key="13">
    <source>
    </source>
</evidence>
<evidence type="ECO:0007829" key="14">
    <source>
        <dbReference type="PDB" id="1DCQ"/>
    </source>
</evidence>
<dbReference type="EMBL" id="BC096022">
    <property type="protein sequence ID" value="AAH96022.1"/>
    <property type="molecule type" value="mRNA"/>
</dbReference>
<dbReference type="EMBL" id="BC080847">
    <property type="protein sequence ID" value="AAH80847.1"/>
    <property type="molecule type" value="mRNA"/>
</dbReference>
<dbReference type="CCDS" id="CCDS56832.1">
    <molecule id="Q7SIG6-1"/>
</dbReference>
<dbReference type="RefSeq" id="NP_001004364.2">
    <property type="nucleotide sequence ID" value="NM_001004364.2"/>
</dbReference>
<dbReference type="RefSeq" id="NP_001091637.1">
    <molecule id="Q7SIG6-1"/>
    <property type="nucleotide sequence ID" value="NM_001098168.1"/>
</dbReference>
<dbReference type="RefSeq" id="NP_001128664.1">
    <property type="nucleotide sequence ID" value="NM_001135192.1"/>
</dbReference>
<dbReference type="PDB" id="1DCQ">
    <property type="method" value="X-ray"/>
    <property type="resolution" value="2.10 A"/>
    <property type="chains" value="A=421-697"/>
</dbReference>
<dbReference type="PDBsum" id="1DCQ"/>
<dbReference type="SMR" id="Q7SIG6"/>
<dbReference type="BioGRID" id="229271">
    <property type="interactions" value="16"/>
</dbReference>
<dbReference type="FunCoup" id="Q7SIG6">
    <property type="interactions" value="1365"/>
</dbReference>
<dbReference type="IntAct" id="Q7SIG6">
    <property type="interactions" value="2"/>
</dbReference>
<dbReference type="MINT" id="Q7SIG6"/>
<dbReference type="STRING" id="10090.ENSMUSP00000063217"/>
<dbReference type="GlyGen" id="Q7SIG6">
    <property type="glycosylation" value="2 sites, 1 N-linked glycan (1 site), 1 O-linked glycan (1 site)"/>
</dbReference>
<dbReference type="iPTMnet" id="Q7SIG6"/>
<dbReference type="PhosphoSitePlus" id="Q7SIG6"/>
<dbReference type="SwissPalm" id="Q7SIG6"/>
<dbReference type="jPOST" id="Q7SIG6"/>
<dbReference type="PaxDb" id="10090-ENSMUSP00000063217"/>
<dbReference type="PeptideAtlas" id="Q7SIG6"/>
<dbReference type="ProteomicsDB" id="283178">
    <molecule id="Q7SIG6-1"/>
</dbReference>
<dbReference type="ProteomicsDB" id="283179">
    <molecule id="Q7SIG6-2"/>
</dbReference>
<dbReference type="Pumba" id="Q7SIG6"/>
<dbReference type="Antibodypedia" id="4352">
    <property type="antibodies" value="106 antibodies from 29 providers"/>
</dbReference>
<dbReference type="DNASU" id="211914"/>
<dbReference type="Ensembl" id="ENSMUST00000090834.13">
    <molecule id="Q7SIG6-2"/>
    <property type="protein sequence ID" value="ENSMUSP00000088344.7"/>
    <property type="gene ID" value="ENSMUSG00000052632.17"/>
</dbReference>
<dbReference type="Ensembl" id="ENSMUST00000101562.11">
    <molecule id="Q7SIG6-1"/>
    <property type="protein sequence ID" value="ENSMUSP00000099098.5"/>
    <property type="gene ID" value="ENSMUSG00000052632.17"/>
</dbReference>
<dbReference type="GeneID" id="211914"/>
<dbReference type="KEGG" id="mmu:211914"/>
<dbReference type="UCSC" id="uc007ndi.1">
    <molecule id="Q7SIG6-1"/>
    <property type="organism name" value="mouse"/>
</dbReference>
<dbReference type="UCSC" id="uc011ykr.1">
    <molecule id="Q7SIG6-2"/>
    <property type="organism name" value="mouse"/>
</dbReference>
<dbReference type="AGR" id="MGI:2685438"/>
<dbReference type="CTD" id="8853"/>
<dbReference type="MGI" id="MGI:2685438">
    <property type="gene designation" value="Asap2"/>
</dbReference>
<dbReference type="VEuPathDB" id="HostDB:ENSMUSG00000052632"/>
<dbReference type="eggNOG" id="KOG0521">
    <property type="taxonomic scope" value="Eukaryota"/>
</dbReference>
<dbReference type="GeneTree" id="ENSGT00940000155623"/>
<dbReference type="InParanoid" id="Q7SIG6"/>
<dbReference type="BioGRID-ORCS" id="211914">
    <property type="hits" value="1 hit in 78 CRISPR screens"/>
</dbReference>
<dbReference type="ChiTaRS" id="Asap2">
    <property type="organism name" value="mouse"/>
</dbReference>
<dbReference type="EvolutionaryTrace" id="Q7SIG6"/>
<dbReference type="PRO" id="PR:Q7SIG6"/>
<dbReference type="Proteomes" id="UP000000589">
    <property type="component" value="Chromosome 12"/>
</dbReference>
<dbReference type="RNAct" id="Q7SIG6">
    <property type="molecule type" value="protein"/>
</dbReference>
<dbReference type="Bgee" id="ENSMUSG00000052632">
    <property type="expression patterns" value="Expressed in lumbar subsegment of spinal cord and 192 other cell types or tissues"/>
</dbReference>
<dbReference type="ExpressionAtlas" id="Q7SIG6">
    <property type="expression patterns" value="baseline and differential"/>
</dbReference>
<dbReference type="GO" id="GO:0032580">
    <property type="term" value="C:Golgi cisterna membrane"/>
    <property type="evidence" value="ECO:0007669"/>
    <property type="project" value="UniProtKB-SubCell"/>
</dbReference>
<dbReference type="GO" id="GO:0005886">
    <property type="term" value="C:plasma membrane"/>
    <property type="evidence" value="ECO:0007669"/>
    <property type="project" value="UniProtKB-SubCell"/>
</dbReference>
<dbReference type="GO" id="GO:0005096">
    <property type="term" value="F:GTPase activator activity"/>
    <property type="evidence" value="ECO:0007669"/>
    <property type="project" value="UniProtKB-KW"/>
</dbReference>
<dbReference type="GO" id="GO:0046872">
    <property type="term" value="F:metal ion binding"/>
    <property type="evidence" value="ECO:0007669"/>
    <property type="project" value="UniProtKB-KW"/>
</dbReference>
<dbReference type="CDD" id="cd08849">
    <property type="entry name" value="ArfGap_ASAP2"/>
    <property type="match status" value="1"/>
</dbReference>
<dbReference type="CDD" id="cd13251">
    <property type="entry name" value="PH_ASAP"/>
    <property type="match status" value="1"/>
</dbReference>
<dbReference type="CDD" id="cd11966">
    <property type="entry name" value="SH3_ASAP2"/>
    <property type="match status" value="1"/>
</dbReference>
<dbReference type="FunFam" id="1.20.1270.60:FF:000004">
    <property type="entry name" value="Arf-GAP with SH3 domain, ANK repeat and PH domain-containing protein 1"/>
    <property type="match status" value="1"/>
</dbReference>
<dbReference type="FunFam" id="1.25.40.950:FF:000001">
    <property type="entry name" value="Arf-GAP with SH3 domain, ANK repeat and PH domain-containing protein 1"/>
    <property type="match status" value="1"/>
</dbReference>
<dbReference type="FunFam" id="1.10.220.150:FF:000002">
    <property type="entry name" value="arf-GAP with SH3 domain, ANK repeat and PH domain-containing protein 1"/>
    <property type="match status" value="1"/>
</dbReference>
<dbReference type="FunFam" id="1.25.40.20:FF:000006">
    <property type="entry name" value="Arf-GAP with SH3 domain, ANK repeat and PH domain-containing protein 2"/>
    <property type="match status" value="1"/>
</dbReference>
<dbReference type="FunFam" id="2.30.29.30:FF:000012">
    <property type="entry name" value="Arf-GAP with SH3 domain, ANK repeat and PH domain-containing protein 2"/>
    <property type="match status" value="1"/>
</dbReference>
<dbReference type="FunFam" id="2.30.30.40:FF:000012">
    <property type="entry name" value="Arf-GAP with SH3 domain, ANK repeat and PH domain-containing protein 2"/>
    <property type="match status" value="1"/>
</dbReference>
<dbReference type="Gene3D" id="1.25.40.950">
    <property type="match status" value="1"/>
</dbReference>
<dbReference type="Gene3D" id="1.25.40.20">
    <property type="entry name" value="Ankyrin repeat-containing domain"/>
    <property type="match status" value="1"/>
</dbReference>
<dbReference type="Gene3D" id="1.10.220.150">
    <property type="entry name" value="Arf GTPase activating protein"/>
    <property type="match status" value="1"/>
</dbReference>
<dbReference type="Gene3D" id="1.20.1270.60">
    <property type="entry name" value="Arfaptin homology (AH) domain/BAR domain"/>
    <property type="match status" value="1"/>
</dbReference>
<dbReference type="Gene3D" id="2.30.29.30">
    <property type="entry name" value="Pleckstrin-homology domain (PH domain)/Phosphotyrosine-binding domain (PTB)"/>
    <property type="match status" value="1"/>
</dbReference>
<dbReference type="Gene3D" id="2.30.30.40">
    <property type="entry name" value="SH3 Domains"/>
    <property type="match status" value="1"/>
</dbReference>
<dbReference type="InterPro" id="IPR027267">
    <property type="entry name" value="AH/BAR_dom_sf"/>
</dbReference>
<dbReference type="InterPro" id="IPR002110">
    <property type="entry name" value="Ankyrin_rpt"/>
</dbReference>
<dbReference type="InterPro" id="IPR036770">
    <property type="entry name" value="Ankyrin_rpt-contain_sf"/>
</dbReference>
<dbReference type="InterPro" id="IPR037278">
    <property type="entry name" value="ARFGAP/RecO"/>
</dbReference>
<dbReference type="InterPro" id="IPR001164">
    <property type="entry name" value="ArfGAP_dom"/>
</dbReference>
<dbReference type="InterPro" id="IPR038508">
    <property type="entry name" value="ArfGAP_dom_sf"/>
</dbReference>
<dbReference type="InterPro" id="IPR043593">
    <property type="entry name" value="ASAP"/>
</dbReference>
<dbReference type="InterPro" id="IPR035677">
    <property type="entry name" value="ASAP2_SH3"/>
</dbReference>
<dbReference type="InterPro" id="IPR004148">
    <property type="entry name" value="BAR_dom"/>
</dbReference>
<dbReference type="InterPro" id="IPR011993">
    <property type="entry name" value="PH-like_dom_sf"/>
</dbReference>
<dbReference type="InterPro" id="IPR037844">
    <property type="entry name" value="PH_ASAP"/>
</dbReference>
<dbReference type="InterPro" id="IPR001849">
    <property type="entry name" value="PH_domain"/>
</dbReference>
<dbReference type="InterPro" id="IPR036028">
    <property type="entry name" value="SH3-like_dom_sf"/>
</dbReference>
<dbReference type="InterPro" id="IPR001452">
    <property type="entry name" value="SH3_domain"/>
</dbReference>
<dbReference type="PANTHER" id="PTHR45854:SF4">
    <property type="entry name" value="ARF-GAP WITH SH3 DOMAIN, ANK REPEAT AND PH DOMAIN-CONTAINING PROTEIN 2"/>
    <property type="match status" value="1"/>
</dbReference>
<dbReference type="PANTHER" id="PTHR45854">
    <property type="entry name" value="ASAP FAMILY MEMBER"/>
    <property type="match status" value="1"/>
</dbReference>
<dbReference type="Pfam" id="PF12796">
    <property type="entry name" value="Ank_2"/>
    <property type="match status" value="1"/>
</dbReference>
<dbReference type="Pfam" id="PF01412">
    <property type="entry name" value="ArfGap"/>
    <property type="match status" value="1"/>
</dbReference>
<dbReference type="Pfam" id="PF16746">
    <property type="entry name" value="BAR_3"/>
    <property type="match status" value="1"/>
</dbReference>
<dbReference type="Pfam" id="PF00169">
    <property type="entry name" value="PH"/>
    <property type="match status" value="1"/>
</dbReference>
<dbReference type="Pfam" id="PF14604">
    <property type="entry name" value="SH3_9"/>
    <property type="match status" value="1"/>
</dbReference>
<dbReference type="PRINTS" id="PR00405">
    <property type="entry name" value="REVINTRACTNG"/>
</dbReference>
<dbReference type="SMART" id="SM00248">
    <property type="entry name" value="ANK"/>
    <property type="match status" value="3"/>
</dbReference>
<dbReference type="SMART" id="SM00105">
    <property type="entry name" value="ArfGap"/>
    <property type="match status" value="1"/>
</dbReference>
<dbReference type="SMART" id="SM00233">
    <property type="entry name" value="PH"/>
    <property type="match status" value="1"/>
</dbReference>
<dbReference type="SMART" id="SM00326">
    <property type="entry name" value="SH3"/>
    <property type="match status" value="1"/>
</dbReference>
<dbReference type="SUPFAM" id="SSF48403">
    <property type="entry name" value="Ankyrin repeat"/>
    <property type="match status" value="1"/>
</dbReference>
<dbReference type="SUPFAM" id="SSF57863">
    <property type="entry name" value="ArfGap/RecO-like zinc finger"/>
    <property type="match status" value="1"/>
</dbReference>
<dbReference type="SUPFAM" id="SSF103657">
    <property type="entry name" value="BAR/IMD domain-like"/>
    <property type="match status" value="1"/>
</dbReference>
<dbReference type="SUPFAM" id="SSF50729">
    <property type="entry name" value="PH domain-like"/>
    <property type="match status" value="1"/>
</dbReference>
<dbReference type="SUPFAM" id="SSF50044">
    <property type="entry name" value="SH3-domain"/>
    <property type="match status" value="1"/>
</dbReference>
<dbReference type="PROSITE" id="PS50297">
    <property type="entry name" value="ANK_REP_REGION"/>
    <property type="match status" value="1"/>
</dbReference>
<dbReference type="PROSITE" id="PS50088">
    <property type="entry name" value="ANK_REPEAT"/>
    <property type="match status" value="1"/>
</dbReference>
<dbReference type="PROSITE" id="PS50115">
    <property type="entry name" value="ARFGAP"/>
    <property type="match status" value="1"/>
</dbReference>
<dbReference type="PROSITE" id="PS50003">
    <property type="entry name" value="PH_DOMAIN"/>
    <property type="match status" value="1"/>
</dbReference>
<dbReference type="PROSITE" id="PS50002">
    <property type="entry name" value="SH3"/>
    <property type="match status" value="1"/>
</dbReference>
<reference key="1">
    <citation type="journal article" date="2004" name="Genome Res.">
        <title>The status, quality, and expansion of the NIH full-length cDNA project: the Mammalian Gene Collection (MGC).</title>
        <authorList>
            <consortium name="The MGC Project Team"/>
        </authorList>
    </citation>
    <scope>NUCLEOTIDE SEQUENCE [LARGE SCALE MRNA] (ISOFORMS 1 AND 2)</scope>
    <source>
        <strain>C57BL/6J</strain>
        <tissue>Brain</tissue>
    </source>
</reference>
<reference key="2">
    <citation type="submission" date="2009-01" db="UniProtKB">
        <authorList>
            <person name="Lubec G."/>
            <person name="Sunyer B."/>
            <person name="Chen W.-Q."/>
        </authorList>
    </citation>
    <scope>PROTEIN SEQUENCE OF 425-432</scope>
    <scope>IDENTIFICATION BY MASS SPECTROMETRY</scope>
    <source>
        <strain>OF1</strain>
        <tissue>Hippocampus</tissue>
    </source>
</reference>
<reference key="3">
    <citation type="journal article" date="1999" name="Mol. Cell. Biol.">
        <title>Identification of a new Pyk2 target protein with Arf-GAP activity.</title>
        <authorList>
            <person name="Andreev J."/>
            <person name="Simon J.-P."/>
            <person name="Sabatini D.D."/>
            <person name="Kam J."/>
            <person name="Plowman G."/>
            <person name="Randazzo P.A."/>
            <person name="Schlessinger J."/>
        </authorList>
    </citation>
    <scope>FUNCTION</scope>
    <scope>PHOSPHORYLATION</scope>
    <scope>INTERACTION WITH PTK2B AND SRC</scope>
    <scope>SUBCELLULAR LOCATION</scope>
</reference>
<reference key="4">
    <citation type="journal article" date="2001" name="J. Exp. Med.">
        <title>PAG3/Papalpha/KIAA0400, a GTPase-activating protein for ADP-ribosylation factor (ARF), regulates ARF6 in Fcgamma receptor-mediated phagocytosis of macrophages.</title>
        <authorList>
            <person name="Uchida H."/>
            <person name="Kondo A."/>
            <person name="Yoshimura Y."/>
            <person name="Mazaki Y."/>
            <person name="Sabe H."/>
        </authorList>
    </citation>
    <scope>FUNCTION</scope>
    <scope>SUBCELLULAR LOCATION</scope>
    <scope>INTERACTION WITH ARF6 AND ACTIN FILAMENTS</scope>
</reference>
<reference key="5">
    <citation type="journal article" date="2007" name="Proc. Natl. Acad. Sci. U.S.A.">
        <title>Large-scale phosphorylation analysis of mouse liver.</title>
        <authorList>
            <person name="Villen J."/>
            <person name="Beausoleil S.A."/>
            <person name="Gerber S.A."/>
            <person name="Gygi S.P."/>
        </authorList>
    </citation>
    <scope>PHOSPHORYLATION [LARGE SCALE ANALYSIS] AT SER-704</scope>
    <scope>IDENTIFICATION BY MASS SPECTROMETRY [LARGE SCALE ANALYSIS]</scope>
    <source>
        <tissue>Liver</tissue>
    </source>
</reference>
<reference key="6">
    <citation type="journal article" date="2008" name="J. Proteome Res.">
        <title>Specific phosphopeptide enrichment with immobilized titanium ion affinity chromatography adsorbent for phosphoproteome analysis.</title>
        <authorList>
            <person name="Zhou H."/>
            <person name="Ye M."/>
            <person name="Dong J."/>
            <person name="Han G."/>
            <person name="Jiang X."/>
            <person name="Wu R."/>
            <person name="Zou H."/>
        </authorList>
    </citation>
    <scope>IDENTIFICATION BY MASS SPECTROMETRY [LARGE SCALE ANALYSIS]</scope>
    <source>
        <tissue>Liver</tissue>
    </source>
</reference>
<reference key="7">
    <citation type="journal article" date="2010" name="Cell">
        <title>A tissue-specific atlas of mouse protein phosphorylation and expression.</title>
        <authorList>
            <person name="Huttlin E.L."/>
            <person name="Jedrychowski M.P."/>
            <person name="Elias J.E."/>
            <person name="Goswami T."/>
            <person name="Rad R."/>
            <person name="Beausoleil S.A."/>
            <person name="Villen J."/>
            <person name="Haas W."/>
            <person name="Sowa M.E."/>
            <person name="Gygi S.P."/>
        </authorList>
    </citation>
    <scope>PHOSPHORYLATION [LARGE SCALE ANALYSIS] AT SER-704</scope>
    <scope>IDENTIFICATION BY MASS SPECTROMETRY [LARGE SCALE ANALYSIS]</scope>
    <source>
        <tissue>Brain</tissue>
        <tissue>Heart</tissue>
        <tissue>Kidney</tissue>
        <tissue>Liver</tissue>
        <tissue>Lung</tissue>
        <tissue>Pancreas</tissue>
        <tissue>Spleen</tissue>
        <tissue>Testis</tissue>
    </source>
</reference>
<reference key="8">
    <citation type="journal article" date="1999" name="EMBO J.">
        <title>Crystal structure of the ARF-GAP domain and ankyrin repeats of PYK2-associated protein beta.</title>
        <authorList>
            <person name="Mandiyan V."/>
            <person name="Andreev J."/>
            <person name="Schlessinger J."/>
            <person name="Hubbard S.R."/>
        </authorList>
    </citation>
    <scope>X-RAY CRYSTALLOGRAPHY (2.1 ANGSTROMS) OF 421-679 IN COMPLEX WITH A ZINC ION</scope>
    <scope>MUTAGENESIS OF TRP-449; ILE-460; ARG-467; LEU-481 AND ASP-482</scope>
</reference>